<accession>Q2PMQ4</accession>
<proteinExistence type="inferred from homology"/>
<reference key="1">
    <citation type="journal article" date="2005" name="Plant Mol. Biol.">
        <title>Complete chloroplast genome sequence of Glycine max and comparative analyses with other legume genomes.</title>
        <authorList>
            <person name="Saski C."/>
            <person name="Lee S.-B."/>
            <person name="Daniell H."/>
            <person name="Wood T.C."/>
            <person name="Tomkins J."/>
            <person name="Kim H.-G."/>
            <person name="Jansen R.K."/>
        </authorList>
    </citation>
    <scope>NUCLEOTIDE SEQUENCE [LARGE SCALE GENOMIC DNA]</scope>
    <source>
        <strain>cv. PI 437654</strain>
    </source>
</reference>
<organism>
    <name type="scientific">Glycine max</name>
    <name type="common">Soybean</name>
    <name type="synonym">Glycine hispida</name>
    <dbReference type="NCBI Taxonomy" id="3847"/>
    <lineage>
        <taxon>Eukaryota</taxon>
        <taxon>Viridiplantae</taxon>
        <taxon>Streptophyta</taxon>
        <taxon>Embryophyta</taxon>
        <taxon>Tracheophyta</taxon>
        <taxon>Spermatophyta</taxon>
        <taxon>Magnoliopsida</taxon>
        <taxon>eudicotyledons</taxon>
        <taxon>Gunneridae</taxon>
        <taxon>Pentapetalae</taxon>
        <taxon>rosids</taxon>
        <taxon>fabids</taxon>
        <taxon>Fabales</taxon>
        <taxon>Fabaceae</taxon>
        <taxon>Papilionoideae</taxon>
        <taxon>50 kb inversion clade</taxon>
        <taxon>NPAAA clade</taxon>
        <taxon>indigoferoid/millettioid clade</taxon>
        <taxon>Phaseoleae</taxon>
        <taxon>Glycine</taxon>
        <taxon>Glycine subgen. Soja</taxon>
    </lineage>
</organism>
<sequence length="160" mass="17545">MGVTKKPDLNDPVLRAKLAKGMGHNYYGEPAWPNDLLYIFPVVILGTIACNVGLAVLEPSMIGEPADPFATPLEILPEWYFFPVFQILRTVPNKLLGVLLMVSVPTGLLTVPFLENVNKFQNPFRRPVATTIFLIGTVVALWLGIGATLPIEKSLTLGLF</sequence>
<dbReference type="EMBL" id="DQ317523">
    <property type="protein sequence ID" value="ABC25154.1"/>
    <property type="molecule type" value="Genomic_DNA"/>
</dbReference>
<dbReference type="RefSeq" id="YP_538796.1">
    <property type="nucleotide sequence ID" value="NC_007942.1"/>
</dbReference>
<dbReference type="SMR" id="Q2PMQ4"/>
<dbReference type="FunCoup" id="Q2PMQ4">
    <property type="interactions" value="558"/>
</dbReference>
<dbReference type="STRING" id="3847.Q2PMQ4"/>
<dbReference type="PaxDb" id="3847-GLYMA15G12130.1"/>
<dbReference type="GeneID" id="3989328"/>
<dbReference type="KEGG" id="gmx:3989328"/>
<dbReference type="eggNOG" id="KOG4663">
    <property type="taxonomic scope" value="Eukaryota"/>
</dbReference>
<dbReference type="InParanoid" id="Q2PMQ4"/>
<dbReference type="Proteomes" id="UP000008827">
    <property type="component" value="Chloroplast"/>
</dbReference>
<dbReference type="GO" id="GO:0009535">
    <property type="term" value="C:chloroplast thylakoid membrane"/>
    <property type="evidence" value="ECO:0007669"/>
    <property type="project" value="UniProtKB-SubCell"/>
</dbReference>
<dbReference type="GO" id="GO:0045158">
    <property type="term" value="F:electron transporter, transferring electrons within cytochrome b6/f complex of photosystem II activity"/>
    <property type="evidence" value="ECO:0007669"/>
    <property type="project" value="UniProtKB-UniRule"/>
</dbReference>
<dbReference type="GO" id="GO:0045156">
    <property type="term" value="F:electron transporter, transferring electrons within the cyclic electron transport pathway of photosynthesis activity"/>
    <property type="evidence" value="ECO:0007669"/>
    <property type="project" value="InterPro"/>
</dbReference>
<dbReference type="GO" id="GO:0016491">
    <property type="term" value="F:oxidoreductase activity"/>
    <property type="evidence" value="ECO:0007669"/>
    <property type="project" value="InterPro"/>
</dbReference>
<dbReference type="GO" id="GO:0009767">
    <property type="term" value="P:photosynthetic electron transport chain"/>
    <property type="evidence" value="ECO:0007669"/>
    <property type="project" value="InterPro"/>
</dbReference>
<dbReference type="CDD" id="cd00290">
    <property type="entry name" value="cytochrome_b_C"/>
    <property type="match status" value="1"/>
</dbReference>
<dbReference type="FunFam" id="1.10.287.980:FF:000001">
    <property type="entry name" value="Cytochrome b6-f complex subunit 4"/>
    <property type="match status" value="1"/>
</dbReference>
<dbReference type="FunFam" id="1.20.5.510:FF:000002">
    <property type="entry name" value="Cytochrome b6-f complex subunit 4"/>
    <property type="match status" value="1"/>
</dbReference>
<dbReference type="Gene3D" id="1.10.287.980">
    <property type="entry name" value="plastocyanin oxidoreductase"/>
    <property type="match status" value="1"/>
</dbReference>
<dbReference type="Gene3D" id="1.20.5.510">
    <property type="entry name" value="Single helix bin"/>
    <property type="match status" value="1"/>
</dbReference>
<dbReference type="HAMAP" id="MF_01344">
    <property type="entry name" value="Cytb6_f_subIV"/>
    <property type="match status" value="1"/>
</dbReference>
<dbReference type="InterPro" id="IPR005798">
    <property type="entry name" value="Cyt_b/b6_C"/>
</dbReference>
<dbReference type="InterPro" id="IPR036150">
    <property type="entry name" value="Cyt_b/b6_C_sf"/>
</dbReference>
<dbReference type="InterPro" id="IPR005870">
    <property type="entry name" value="Cyt_b6/f_cplx_suIV"/>
</dbReference>
<dbReference type="InterPro" id="IPR048260">
    <property type="entry name" value="Cytochrome_b_C_euk/bac"/>
</dbReference>
<dbReference type="NCBIfam" id="TIGR01156">
    <property type="entry name" value="cytb6_f_IV"/>
    <property type="match status" value="1"/>
</dbReference>
<dbReference type="PANTHER" id="PTHR19271">
    <property type="entry name" value="CYTOCHROME B"/>
    <property type="match status" value="1"/>
</dbReference>
<dbReference type="PANTHER" id="PTHR19271:SF41">
    <property type="entry name" value="CYTOCHROME B_B6 C-TERMINAL REGION PROFILE DOMAIN-CONTAINING PROTEIN"/>
    <property type="match status" value="1"/>
</dbReference>
<dbReference type="Pfam" id="PF00032">
    <property type="entry name" value="Cytochrom_B_C"/>
    <property type="match status" value="1"/>
</dbReference>
<dbReference type="PIRSF" id="PIRSF000033">
    <property type="entry name" value="B6f_17K"/>
    <property type="match status" value="1"/>
</dbReference>
<dbReference type="SUPFAM" id="SSF81648">
    <property type="entry name" value="a domain/subunit of cytochrome bc1 complex (Ubiquinol-cytochrome c reductase)"/>
    <property type="match status" value="1"/>
</dbReference>
<dbReference type="PROSITE" id="PS51003">
    <property type="entry name" value="CYTB_CTER"/>
    <property type="match status" value="1"/>
</dbReference>
<evidence type="ECO:0000250" key="1"/>
<evidence type="ECO:0000255" key="2">
    <source>
        <dbReference type="HAMAP-Rule" id="MF_01344"/>
    </source>
</evidence>
<gene>
    <name evidence="2" type="primary">petD</name>
</gene>
<name>PETD_SOYBN</name>
<keyword id="KW-0150">Chloroplast</keyword>
<keyword id="KW-0249">Electron transport</keyword>
<keyword id="KW-0472">Membrane</keyword>
<keyword id="KW-0602">Photosynthesis</keyword>
<keyword id="KW-0934">Plastid</keyword>
<keyword id="KW-1185">Reference proteome</keyword>
<keyword id="KW-0793">Thylakoid</keyword>
<keyword id="KW-0812">Transmembrane</keyword>
<keyword id="KW-1133">Transmembrane helix</keyword>
<keyword id="KW-0813">Transport</keyword>
<comment type="function">
    <text evidence="2">Component of the cytochrome b6-f complex, which mediates electron transfer between photosystem II (PSII) and photosystem I (PSI), cyclic electron flow around PSI, and state transitions.</text>
</comment>
<comment type="subunit">
    <text evidence="1">The 4 large subunits of the cytochrome b6-f complex are cytochrome b6, subunit IV (17 kDa polypeptide, petD), cytochrome f and the Rieske protein, while the 4 small subunits are petG, petL, petM and petN. The complex functions as a dimer (By similarity).</text>
</comment>
<comment type="subcellular location">
    <subcellularLocation>
        <location evidence="2">Plastid</location>
        <location evidence="2">Chloroplast thylakoid membrane</location>
        <topology evidence="2">Multi-pass membrane protein</topology>
    </subcellularLocation>
</comment>
<comment type="similarity">
    <text evidence="2">Belongs to the cytochrome b family. PetD subfamily.</text>
</comment>
<protein>
    <recommendedName>
        <fullName evidence="2">Cytochrome b6-f complex subunit 4</fullName>
    </recommendedName>
    <alternativeName>
        <fullName evidence="2">17 kDa polypeptide</fullName>
    </alternativeName>
</protein>
<feature type="chain" id="PRO_0000255573" description="Cytochrome b6-f complex subunit 4">
    <location>
        <begin position="1"/>
        <end position="160"/>
    </location>
</feature>
<feature type="transmembrane region" description="Helical" evidence="2">
    <location>
        <begin position="36"/>
        <end position="56"/>
    </location>
</feature>
<feature type="transmembrane region" description="Helical" evidence="2">
    <location>
        <begin position="95"/>
        <end position="115"/>
    </location>
</feature>
<feature type="transmembrane region" description="Helical" evidence="2">
    <location>
        <begin position="131"/>
        <end position="151"/>
    </location>
</feature>
<geneLocation type="chloroplast"/>